<proteinExistence type="inferred from homology"/>
<gene>
    <name evidence="1" type="primary">aroQ</name>
    <name type="ordered locus">Shewana3_0511</name>
</gene>
<comment type="function">
    <text evidence="1">Catalyzes a trans-dehydration via an enolate intermediate.</text>
</comment>
<comment type="catalytic activity">
    <reaction evidence="1">
        <text>3-dehydroquinate = 3-dehydroshikimate + H2O</text>
        <dbReference type="Rhea" id="RHEA:21096"/>
        <dbReference type="ChEBI" id="CHEBI:15377"/>
        <dbReference type="ChEBI" id="CHEBI:16630"/>
        <dbReference type="ChEBI" id="CHEBI:32364"/>
        <dbReference type="EC" id="4.2.1.10"/>
    </reaction>
</comment>
<comment type="pathway">
    <text evidence="1">Metabolic intermediate biosynthesis; chorismate biosynthesis; chorismate from D-erythrose 4-phosphate and phosphoenolpyruvate: step 3/7.</text>
</comment>
<comment type="subunit">
    <text evidence="1">Homododecamer.</text>
</comment>
<comment type="similarity">
    <text evidence="1">Belongs to the type-II 3-dehydroquinase family.</text>
</comment>
<feature type="chain" id="PRO_1000023514" description="3-dehydroquinate dehydratase">
    <location>
        <begin position="1"/>
        <end position="144"/>
    </location>
</feature>
<feature type="active site" description="Proton acceptor" evidence="1">
    <location>
        <position position="24"/>
    </location>
</feature>
<feature type="active site" description="Proton donor" evidence="1">
    <location>
        <position position="99"/>
    </location>
</feature>
<feature type="binding site" evidence="1">
    <location>
        <position position="73"/>
    </location>
    <ligand>
        <name>substrate</name>
    </ligand>
</feature>
<feature type="binding site" evidence="1">
    <location>
        <position position="79"/>
    </location>
    <ligand>
        <name>substrate</name>
    </ligand>
</feature>
<feature type="binding site" evidence="1">
    <location>
        <position position="86"/>
    </location>
    <ligand>
        <name>substrate</name>
    </ligand>
</feature>
<feature type="binding site" evidence="1">
    <location>
        <begin position="100"/>
        <end position="101"/>
    </location>
    <ligand>
        <name>substrate</name>
    </ligand>
</feature>
<feature type="binding site" evidence="1">
    <location>
        <position position="110"/>
    </location>
    <ligand>
        <name>substrate</name>
    </ligand>
</feature>
<feature type="site" description="Transition state stabilizer" evidence="1">
    <location>
        <position position="19"/>
    </location>
</feature>
<accession>A0KSI2</accession>
<organism>
    <name type="scientific">Shewanella sp. (strain ANA-3)</name>
    <dbReference type="NCBI Taxonomy" id="94122"/>
    <lineage>
        <taxon>Bacteria</taxon>
        <taxon>Pseudomonadati</taxon>
        <taxon>Pseudomonadota</taxon>
        <taxon>Gammaproteobacteria</taxon>
        <taxon>Alteromonadales</taxon>
        <taxon>Shewanellaceae</taxon>
        <taxon>Shewanella</taxon>
    </lineage>
</organism>
<name>AROQ_SHESA</name>
<evidence type="ECO:0000255" key="1">
    <source>
        <dbReference type="HAMAP-Rule" id="MF_00169"/>
    </source>
</evidence>
<sequence>MNHKVLLINGPNLNLLGRREPSVYGHQTLADIVALLSEQAQAAGVELEHIQSNAEFELINAIHATDAQMIIINPAAFTHTSVALRDALLGVDIPFFEVHLSNVHAREPFRHHSYLSDKAIGVICGFGAQGYEFALAAAIKRLKA</sequence>
<keyword id="KW-0028">Amino-acid biosynthesis</keyword>
<keyword id="KW-0057">Aromatic amino acid biosynthesis</keyword>
<keyword id="KW-0456">Lyase</keyword>
<reference key="1">
    <citation type="submission" date="2006-09" db="EMBL/GenBank/DDBJ databases">
        <title>Complete sequence of chromosome 1 of Shewanella sp. ANA-3.</title>
        <authorList>
            <person name="Copeland A."/>
            <person name="Lucas S."/>
            <person name="Lapidus A."/>
            <person name="Barry K."/>
            <person name="Detter J.C."/>
            <person name="Glavina del Rio T."/>
            <person name="Hammon N."/>
            <person name="Israni S."/>
            <person name="Dalin E."/>
            <person name="Tice H."/>
            <person name="Pitluck S."/>
            <person name="Chertkov O."/>
            <person name="Brettin T."/>
            <person name="Bruce D."/>
            <person name="Han C."/>
            <person name="Tapia R."/>
            <person name="Gilna P."/>
            <person name="Schmutz J."/>
            <person name="Larimer F."/>
            <person name="Land M."/>
            <person name="Hauser L."/>
            <person name="Kyrpides N."/>
            <person name="Kim E."/>
            <person name="Newman D."/>
            <person name="Salticov C."/>
            <person name="Konstantinidis K."/>
            <person name="Klappenback J."/>
            <person name="Tiedje J."/>
            <person name="Richardson P."/>
        </authorList>
    </citation>
    <scope>NUCLEOTIDE SEQUENCE [LARGE SCALE GENOMIC DNA]</scope>
    <source>
        <strain>ANA-3</strain>
    </source>
</reference>
<dbReference type="EC" id="4.2.1.10" evidence="1"/>
<dbReference type="EMBL" id="CP000469">
    <property type="protein sequence ID" value="ABK46751.1"/>
    <property type="molecule type" value="Genomic_DNA"/>
</dbReference>
<dbReference type="RefSeq" id="WP_011715716.1">
    <property type="nucleotide sequence ID" value="NC_008577.1"/>
</dbReference>
<dbReference type="SMR" id="A0KSI2"/>
<dbReference type="STRING" id="94122.Shewana3_0511"/>
<dbReference type="KEGG" id="shn:Shewana3_0511"/>
<dbReference type="eggNOG" id="COG0757">
    <property type="taxonomic scope" value="Bacteria"/>
</dbReference>
<dbReference type="HOGENOM" id="CLU_090968_1_0_6"/>
<dbReference type="OrthoDB" id="9790793at2"/>
<dbReference type="UniPathway" id="UPA00053">
    <property type="reaction ID" value="UER00086"/>
</dbReference>
<dbReference type="Proteomes" id="UP000002589">
    <property type="component" value="Chromosome"/>
</dbReference>
<dbReference type="GO" id="GO:0003855">
    <property type="term" value="F:3-dehydroquinate dehydratase activity"/>
    <property type="evidence" value="ECO:0007669"/>
    <property type="project" value="UniProtKB-UniRule"/>
</dbReference>
<dbReference type="GO" id="GO:0008652">
    <property type="term" value="P:amino acid biosynthetic process"/>
    <property type="evidence" value="ECO:0007669"/>
    <property type="project" value="UniProtKB-KW"/>
</dbReference>
<dbReference type="GO" id="GO:0009073">
    <property type="term" value="P:aromatic amino acid family biosynthetic process"/>
    <property type="evidence" value="ECO:0007669"/>
    <property type="project" value="UniProtKB-KW"/>
</dbReference>
<dbReference type="GO" id="GO:0009423">
    <property type="term" value="P:chorismate biosynthetic process"/>
    <property type="evidence" value="ECO:0007669"/>
    <property type="project" value="UniProtKB-UniRule"/>
</dbReference>
<dbReference type="GO" id="GO:0019631">
    <property type="term" value="P:quinate catabolic process"/>
    <property type="evidence" value="ECO:0007669"/>
    <property type="project" value="TreeGrafter"/>
</dbReference>
<dbReference type="CDD" id="cd00466">
    <property type="entry name" value="DHQase_II"/>
    <property type="match status" value="1"/>
</dbReference>
<dbReference type="Gene3D" id="3.40.50.9100">
    <property type="entry name" value="Dehydroquinase, class II"/>
    <property type="match status" value="1"/>
</dbReference>
<dbReference type="HAMAP" id="MF_00169">
    <property type="entry name" value="AroQ"/>
    <property type="match status" value="1"/>
</dbReference>
<dbReference type="InterPro" id="IPR001874">
    <property type="entry name" value="DHquinase_II"/>
</dbReference>
<dbReference type="InterPro" id="IPR018509">
    <property type="entry name" value="DHquinase_II_CS"/>
</dbReference>
<dbReference type="InterPro" id="IPR036441">
    <property type="entry name" value="DHquinase_II_sf"/>
</dbReference>
<dbReference type="NCBIfam" id="TIGR01088">
    <property type="entry name" value="aroQ"/>
    <property type="match status" value="1"/>
</dbReference>
<dbReference type="NCBIfam" id="NF003804">
    <property type="entry name" value="PRK05395.1-1"/>
    <property type="match status" value="1"/>
</dbReference>
<dbReference type="NCBIfam" id="NF003805">
    <property type="entry name" value="PRK05395.1-2"/>
    <property type="match status" value="1"/>
</dbReference>
<dbReference type="NCBIfam" id="NF003806">
    <property type="entry name" value="PRK05395.1-3"/>
    <property type="match status" value="1"/>
</dbReference>
<dbReference type="NCBIfam" id="NF003807">
    <property type="entry name" value="PRK05395.1-4"/>
    <property type="match status" value="1"/>
</dbReference>
<dbReference type="PANTHER" id="PTHR21272">
    <property type="entry name" value="CATABOLIC 3-DEHYDROQUINASE"/>
    <property type="match status" value="1"/>
</dbReference>
<dbReference type="PANTHER" id="PTHR21272:SF3">
    <property type="entry name" value="CATABOLIC 3-DEHYDROQUINASE"/>
    <property type="match status" value="1"/>
</dbReference>
<dbReference type="Pfam" id="PF01220">
    <property type="entry name" value="DHquinase_II"/>
    <property type="match status" value="1"/>
</dbReference>
<dbReference type="PIRSF" id="PIRSF001399">
    <property type="entry name" value="DHquinase_II"/>
    <property type="match status" value="1"/>
</dbReference>
<dbReference type="SUPFAM" id="SSF52304">
    <property type="entry name" value="Type II 3-dehydroquinate dehydratase"/>
    <property type="match status" value="1"/>
</dbReference>
<dbReference type="PROSITE" id="PS01029">
    <property type="entry name" value="DEHYDROQUINASE_II"/>
    <property type="match status" value="1"/>
</dbReference>
<protein>
    <recommendedName>
        <fullName evidence="1">3-dehydroquinate dehydratase</fullName>
        <shortName evidence="1">3-dehydroquinase</shortName>
        <ecNumber evidence="1">4.2.1.10</ecNumber>
    </recommendedName>
    <alternativeName>
        <fullName evidence="1">Type II DHQase</fullName>
    </alternativeName>
</protein>